<name>GPT11_HUMAN</name>
<dbReference type="EMBL" id="AK095667">
    <property type="protein sequence ID" value="BAC04602.1"/>
    <property type="molecule type" value="mRNA"/>
</dbReference>
<dbReference type="EMBL" id="AK289504">
    <property type="protein sequence ID" value="BAF82193.1"/>
    <property type="molecule type" value="mRNA"/>
</dbReference>
<dbReference type="EMBL" id="AK294697">
    <property type="protein sequence ID" value="BAH11850.1"/>
    <property type="status" value="ALT_INIT"/>
    <property type="molecule type" value="mRNA"/>
</dbReference>
<dbReference type="EMBL" id="AC007899">
    <property type="protein sequence ID" value="AAY24316.1"/>
    <property type="molecule type" value="Genomic_DNA"/>
</dbReference>
<dbReference type="EMBL" id="CH471053">
    <property type="protein sequence ID" value="EAX00410.1"/>
    <property type="molecule type" value="Genomic_DNA"/>
</dbReference>
<dbReference type="EMBL" id="BC071798">
    <property type="status" value="NOT_ANNOTATED_CDS"/>
    <property type="molecule type" value="mRNA"/>
</dbReference>
<dbReference type="RefSeq" id="NP_001265434.1">
    <molecule id="Q8N954-2"/>
    <property type="nucleotide sequence ID" value="NM_001278505.2"/>
</dbReference>
<dbReference type="RefSeq" id="NP_001309178.1">
    <property type="nucleotide sequence ID" value="NM_001322249.1"/>
</dbReference>
<dbReference type="RefSeq" id="NP_777591.3">
    <property type="nucleotide sequence ID" value="NM_174931.3"/>
</dbReference>
<dbReference type="RefSeq" id="XP_016859237.1">
    <property type="nucleotide sequence ID" value="XM_017003748.1"/>
</dbReference>
<dbReference type="BioGRID" id="128977">
    <property type="interactions" value="59"/>
</dbReference>
<dbReference type="FunCoup" id="Q8N954">
    <property type="interactions" value="418"/>
</dbReference>
<dbReference type="IntAct" id="Q8N954">
    <property type="interactions" value="50"/>
</dbReference>
<dbReference type="MINT" id="Q8N954"/>
<dbReference type="STRING" id="9606.ENSP00000386772"/>
<dbReference type="GlyGen" id="Q8N954">
    <property type="glycosylation" value="2 sites, 1 O-linked glycan (1 site)"/>
</dbReference>
<dbReference type="iPTMnet" id="Q8N954"/>
<dbReference type="PhosphoSitePlus" id="Q8N954"/>
<dbReference type="BioMuta" id="GPATCH11"/>
<dbReference type="DMDM" id="294862520"/>
<dbReference type="jPOST" id="Q8N954"/>
<dbReference type="MassIVE" id="Q8N954"/>
<dbReference type="PaxDb" id="9606-ENSP00000386772"/>
<dbReference type="PeptideAtlas" id="Q8N954"/>
<dbReference type="ProteomicsDB" id="72488">
    <molecule id="Q8N954-1"/>
</dbReference>
<dbReference type="ProteomicsDB" id="72489">
    <molecule id="Q8N954-2"/>
</dbReference>
<dbReference type="Pumba" id="Q8N954"/>
<dbReference type="Antibodypedia" id="52371">
    <property type="antibodies" value="119 antibodies from 14 providers"/>
</dbReference>
<dbReference type="DNASU" id="253635"/>
<dbReference type="GeneID" id="253635"/>
<dbReference type="KEGG" id="hsa:253635"/>
<dbReference type="UCSC" id="uc002rpr.6">
    <molecule id="Q8N954-1"/>
    <property type="organism name" value="human"/>
</dbReference>
<dbReference type="UCSC" id="uc010ezz.4">
    <property type="organism name" value="human"/>
</dbReference>
<dbReference type="AGR" id="HGNC:26768"/>
<dbReference type="CTD" id="253635"/>
<dbReference type="GeneCards" id="GPATCH11"/>
<dbReference type="HGNC" id="HGNC:26768">
    <property type="gene designation" value="GPATCH11"/>
</dbReference>
<dbReference type="neXtProt" id="NX_Q8N954"/>
<dbReference type="PharmGKB" id="PA143485427"/>
<dbReference type="VEuPathDB" id="HostDB:ENSG00000152133"/>
<dbReference type="eggNOG" id="KOG1994">
    <property type="taxonomic scope" value="Eukaryota"/>
</dbReference>
<dbReference type="InParanoid" id="Q8N954"/>
<dbReference type="OrthoDB" id="786951at2759"/>
<dbReference type="PAN-GO" id="Q8N954">
    <property type="GO annotations" value="1 GO annotation based on evolutionary models"/>
</dbReference>
<dbReference type="PhylomeDB" id="Q8N954"/>
<dbReference type="TreeFam" id="TF313583"/>
<dbReference type="PathwayCommons" id="Q8N954"/>
<dbReference type="SignaLink" id="Q8N954"/>
<dbReference type="BioGRID-ORCS" id="253635">
    <property type="hits" value="5 hits in 979 CRISPR screens"/>
</dbReference>
<dbReference type="GenomeRNAi" id="253635"/>
<dbReference type="Pharos" id="Q8N954">
    <property type="development level" value="Tdark"/>
</dbReference>
<dbReference type="PRO" id="PR:Q8N954"/>
<dbReference type="Proteomes" id="UP000005640">
    <property type="component" value="Chromosome 2"/>
</dbReference>
<dbReference type="RNAct" id="Q8N954">
    <property type="molecule type" value="protein"/>
</dbReference>
<dbReference type="Bgee" id="ENSG00000152133">
    <property type="expression patterns" value="Expressed in calcaneal tendon and 190 other cell types or tissues"/>
</dbReference>
<dbReference type="ExpressionAtlas" id="Q8N954">
    <property type="expression patterns" value="baseline and differential"/>
</dbReference>
<dbReference type="GO" id="GO:0000776">
    <property type="term" value="C:kinetochore"/>
    <property type="evidence" value="ECO:0000314"/>
    <property type="project" value="UniProtKB"/>
</dbReference>
<dbReference type="GO" id="GO:0003676">
    <property type="term" value="F:nucleic acid binding"/>
    <property type="evidence" value="ECO:0007669"/>
    <property type="project" value="InterPro"/>
</dbReference>
<dbReference type="InterPro" id="IPR025239">
    <property type="entry name" value="DUF4187"/>
</dbReference>
<dbReference type="InterPro" id="IPR000467">
    <property type="entry name" value="G_patch_dom"/>
</dbReference>
<dbReference type="InterPro" id="IPR039249">
    <property type="entry name" value="GPATCH11"/>
</dbReference>
<dbReference type="PANTHER" id="PTHR21032">
    <property type="entry name" value="G PATCH DOMAIN-CONTAINING PROTEIN 11"/>
    <property type="match status" value="1"/>
</dbReference>
<dbReference type="PANTHER" id="PTHR21032:SF0">
    <property type="entry name" value="G PATCH DOMAIN-CONTAINING PROTEIN 11"/>
    <property type="match status" value="1"/>
</dbReference>
<dbReference type="Pfam" id="PF13821">
    <property type="entry name" value="DUF4187"/>
    <property type="match status" value="1"/>
</dbReference>
<dbReference type="Pfam" id="PF01585">
    <property type="entry name" value="G-patch"/>
    <property type="match status" value="1"/>
</dbReference>
<dbReference type="SMART" id="SM01173">
    <property type="entry name" value="DUF4187"/>
    <property type="match status" value="1"/>
</dbReference>
<dbReference type="SMART" id="SM00443">
    <property type="entry name" value="G_patch"/>
    <property type="match status" value="1"/>
</dbReference>
<dbReference type="PROSITE" id="PS50174">
    <property type="entry name" value="G_PATCH"/>
    <property type="match status" value="1"/>
</dbReference>
<proteinExistence type="evidence at protein level"/>
<sequence length="285" mass="33277">MRSARSTALNRGEQRAVRYYSHMKLNMAEEEDYMSDSFINVQEDIRPGLPMLRQIREARRKEEKQQEANLKNRQKSLKEEEQERRDIGLKNALGCENKGFALLQKMGYKSGQALGKSGGGIVEPIPLNIKTGKSGIGHEASLKRKAEEKLESYRKKIHMKNQAEEKAAEQFRMRLKNKQDEMKLEGDLRRSQRACQQLDVQKNIQVPREAWYWLRLEEETEEDEEEKEQDEDEYKSEDLSVLEKLQILTSYLREEHLYCIWCGTAYEDKEDLSSNCPGPTSADHD</sequence>
<gene>
    <name type="primary">GPATCH11</name>
    <name type="synonym">CCDC75</name>
    <name evidence="7" type="synonym">CENP-Y</name>
</gene>
<feature type="chain" id="PRO_0000279751" description="G patch domain-containing protein 11">
    <location>
        <begin position="1"/>
        <end position="285"/>
    </location>
</feature>
<feature type="domain" description="G-patch" evidence="2">
    <location>
        <begin position="95"/>
        <end position="141"/>
    </location>
</feature>
<feature type="region of interest" description="Disordered" evidence="3">
    <location>
        <begin position="59"/>
        <end position="84"/>
    </location>
</feature>
<feature type="region of interest" description="Disordered" evidence="3">
    <location>
        <begin position="218"/>
        <end position="237"/>
    </location>
</feature>
<feature type="coiled-coil region" evidence="1">
    <location>
        <begin position="51"/>
        <end position="87"/>
    </location>
</feature>
<feature type="compositionally biased region" description="Acidic residues" evidence="3">
    <location>
        <begin position="218"/>
        <end position="235"/>
    </location>
</feature>
<feature type="modified residue" description="Phosphoserine" evidence="10">
    <location>
        <position position="141"/>
    </location>
</feature>
<feature type="modified residue" description="N6-acetyllysine" evidence="9">
    <location>
        <position position="149"/>
    </location>
</feature>
<feature type="splice variant" id="VSP_023505" description="In isoform 2." evidence="5 6">
    <location>
        <begin position="1"/>
        <end position="129"/>
    </location>
</feature>
<feature type="splice variant" id="VSP_023506" description="In isoform 2." evidence="5 6">
    <original>KTG</original>
    <variation>MSR</variation>
    <location>
        <begin position="130"/>
        <end position="132"/>
    </location>
</feature>
<protein>
    <recommendedName>
        <fullName>G patch domain-containing protein 11</fullName>
    </recommendedName>
    <alternativeName>
        <fullName>Coiled-coil domain-containing protein 75</fullName>
    </alternativeName>
</protein>
<accession>Q8N954</accession>
<accession>A0A0A0MSF9</accession>
<accession>A8K0D9</accession>
<accession>B7Z2G4</accession>
<accession>B8ZZ44</accession>
<keyword id="KW-0007">Acetylation</keyword>
<keyword id="KW-0025">Alternative splicing</keyword>
<keyword id="KW-0137">Centromere</keyword>
<keyword id="KW-0158">Chromosome</keyword>
<keyword id="KW-0175">Coiled coil</keyword>
<keyword id="KW-0995">Kinetochore</keyword>
<keyword id="KW-0597">Phosphoprotein</keyword>
<keyword id="KW-1267">Proteomics identification</keyword>
<keyword id="KW-1185">Reference proteome</keyword>
<evidence type="ECO:0000255" key="1"/>
<evidence type="ECO:0000255" key="2">
    <source>
        <dbReference type="PROSITE-ProRule" id="PRU00092"/>
    </source>
</evidence>
<evidence type="ECO:0000256" key="3">
    <source>
        <dbReference type="SAM" id="MobiDB-lite"/>
    </source>
</evidence>
<evidence type="ECO:0000269" key="4">
    <source>
    </source>
</evidence>
<evidence type="ECO:0000303" key="5">
    <source>
    </source>
</evidence>
<evidence type="ECO:0000303" key="6">
    <source>
    </source>
</evidence>
<evidence type="ECO:0000303" key="7">
    <source>
    </source>
</evidence>
<evidence type="ECO:0000305" key="8"/>
<evidence type="ECO:0007744" key="9">
    <source>
    </source>
</evidence>
<evidence type="ECO:0007744" key="10">
    <source>
    </source>
</evidence>
<organism>
    <name type="scientific">Homo sapiens</name>
    <name type="common">Human</name>
    <dbReference type="NCBI Taxonomy" id="9606"/>
    <lineage>
        <taxon>Eukaryota</taxon>
        <taxon>Metazoa</taxon>
        <taxon>Chordata</taxon>
        <taxon>Craniata</taxon>
        <taxon>Vertebrata</taxon>
        <taxon>Euteleostomi</taxon>
        <taxon>Mammalia</taxon>
        <taxon>Eutheria</taxon>
        <taxon>Euarchontoglires</taxon>
        <taxon>Primates</taxon>
        <taxon>Haplorrhini</taxon>
        <taxon>Catarrhini</taxon>
        <taxon>Hominidae</taxon>
        <taxon>Homo</taxon>
    </lineage>
</organism>
<reference key="1">
    <citation type="journal article" date="2004" name="Nat. Genet.">
        <title>Complete sequencing and characterization of 21,243 full-length human cDNAs.</title>
        <authorList>
            <person name="Ota T."/>
            <person name="Suzuki Y."/>
            <person name="Nishikawa T."/>
            <person name="Otsuki T."/>
            <person name="Sugiyama T."/>
            <person name="Irie R."/>
            <person name="Wakamatsu A."/>
            <person name="Hayashi K."/>
            <person name="Sato H."/>
            <person name="Nagai K."/>
            <person name="Kimura K."/>
            <person name="Makita H."/>
            <person name="Sekine M."/>
            <person name="Obayashi M."/>
            <person name="Nishi T."/>
            <person name="Shibahara T."/>
            <person name="Tanaka T."/>
            <person name="Ishii S."/>
            <person name="Yamamoto J."/>
            <person name="Saito K."/>
            <person name="Kawai Y."/>
            <person name="Isono Y."/>
            <person name="Nakamura Y."/>
            <person name="Nagahari K."/>
            <person name="Murakami K."/>
            <person name="Yasuda T."/>
            <person name="Iwayanagi T."/>
            <person name="Wagatsuma M."/>
            <person name="Shiratori A."/>
            <person name="Sudo H."/>
            <person name="Hosoiri T."/>
            <person name="Kaku Y."/>
            <person name="Kodaira H."/>
            <person name="Kondo H."/>
            <person name="Sugawara M."/>
            <person name="Takahashi M."/>
            <person name="Kanda K."/>
            <person name="Yokoi T."/>
            <person name="Furuya T."/>
            <person name="Kikkawa E."/>
            <person name="Omura Y."/>
            <person name="Abe K."/>
            <person name="Kamihara K."/>
            <person name="Katsuta N."/>
            <person name="Sato K."/>
            <person name="Tanikawa M."/>
            <person name="Yamazaki M."/>
            <person name="Ninomiya K."/>
            <person name="Ishibashi T."/>
            <person name="Yamashita H."/>
            <person name="Murakawa K."/>
            <person name="Fujimori K."/>
            <person name="Tanai H."/>
            <person name="Kimata M."/>
            <person name="Watanabe M."/>
            <person name="Hiraoka S."/>
            <person name="Chiba Y."/>
            <person name="Ishida S."/>
            <person name="Ono Y."/>
            <person name="Takiguchi S."/>
            <person name="Watanabe S."/>
            <person name="Yosida M."/>
            <person name="Hotuta T."/>
            <person name="Kusano J."/>
            <person name="Kanehori K."/>
            <person name="Takahashi-Fujii A."/>
            <person name="Hara H."/>
            <person name="Tanase T.-O."/>
            <person name="Nomura Y."/>
            <person name="Togiya S."/>
            <person name="Komai F."/>
            <person name="Hara R."/>
            <person name="Takeuchi K."/>
            <person name="Arita M."/>
            <person name="Imose N."/>
            <person name="Musashino K."/>
            <person name="Yuuki H."/>
            <person name="Oshima A."/>
            <person name="Sasaki N."/>
            <person name="Aotsuka S."/>
            <person name="Yoshikawa Y."/>
            <person name="Matsunawa H."/>
            <person name="Ichihara T."/>
            <person name="Shiohata N."/>
            <person name="Sano S."/>
            <person name="Moriya S."/>
            <person name="Momiyama H."/>
            <person name="Satoh N."/>
            <person name="Takami S."/>
            <person name="Terashima Y."/>
            <person name="Suzuki O."/>
            <person name="Nakagawa S."/>
            <person name="Senoh A."/>
            <person name="Mizoguchi H."/>
            <person name="Goto Y."/>
            <person name="Shimizu F."/>
            <person name="Wakebe H."/>
            <person name="Hishigaki H."/>
            <person name="Watanabe T."/>
            <person name="Sugiyama A."/>
            <person name="Takemoto M."/>
            <person name="Kawakami B."/>
            <person name="Yamazaki M."/>
            <person name="Watanabe K."/>
            <person name="Kumagai A."/>
            <person name="Itakura S."/>
            <person name="Fukuzumi Y."/>
            <person name="Fujimori Y."/>
            <person name="Komiyama M."/>
            <person name="Tashiro H."/>
            <person name="Tanigami A."/>
            <person name="Fujiwara T."/>
            <person name="Ono T."/>
            <person name="Yamada K."/>
            <person name="Fujii Y."/>
            <person name="Ozaki K."/>
            <person name="Hirao M."/>
            <person name="Ohmori Y."/>
            <person name="Kawabata A."/>
            <person name="Hikiji T."/>
            <person name="Kobatake N."/>
            <person name="Inagaki H."/>
            <person name="Ikema Y."/>
            <person name="Okamoto S."/>
            <person name="Okitani R."/>
            <person name="Kawakami T."/>
            <person name="Noguchi S."/>
            <person name="Itoh T."/>
            <person name="Shigeta K."/>
            <person name="Senba T."/>
            <person name="Matsumura K."/>
            <person name="Nakajima Y."/>
            <person name="Mizuno T."/>
            <person name="Morinaga M."/>
            <person name="Sasaki M."/>
            <person name="Togashi T."/>
            <person name="Oyama M."/>
            <person name="Hata H."/>
            <person name="Watanabe M."/>
            <person name="Komatsu T."/>
            <person name="Mizushima-Sugano J."/>
            <person name="Satoh T."/>
            <person name="Shirai Y."/>
            <person name="Takahashi Y."/>
            <person name="Nakagawa K."/>
            <person name="Okumura K."/>
            <person name="Nagase T."/>
            <person name="Nomura N."/>
            <person name="Kikuchi H."/>
            <person name="Masuho Y."/>
            <person name="Yamashita R."/>
            <person name="Nakai K."/>
            <person name="Yada T."/>
            <person name="Nakamura Y."/>
            <person name="Ohara O."/>
            <person name="Isogai T."/>
            <person name="Sugano S."/>
        </authorList>
    </citation>
    <scope>NUCLEOTIDE SEQUENCE [LARGE SCALE MRNA] (ISOFORM 2)</scope>
    <scope>NUCLEOTIDE SEQUENCE [LARGE SCALE MRNA] OF 8-285 (ISOFORM 1)</scope>
    <source>
        <tissue>Brain</tissue>
        <tissue>Cerebellum</tissue>
    </source>
</reference>
<reference key="2">
    <citation type="journal article" date="2005" name="Nature">
        <title>Generation and annotation of the DNA sequences of human chromosomes 2 and 4.</title>
        <authorList>
            <person name="Hillier L.W."/>
            <person name="Graves T.A."/>
            <person name="Fulton R.S."/>
            <person name="Fulton L.A."/>
            <person name="Pepin K.H."/>
            <person name="Minx P."/>
            <person name="Wagner-McPherson C."/>
            <person name="Layman D."/>
            <person name="Wylie K."/>
            <person name="Sekhon M."/>
            <person name="Becker M.C."/>
            <person name="Fewell G.A."/>
            <person name="Delehaunty K.D."/>
            <person name="Miner T.L."/>
            <person name="Nash W.E."/>
            <person name="Kremitzki C."/>
            <person name="Oddy L."/>
            <person name="Du H."/>
            <person name="Sun H."/>
            <person name="Bradshaw-Cordum H."/>
            <person name="Ali J."/>
            <person name="Carter J."/>
            <person name="Cordes M."/>
            <person name="Harris A."/>
            <person name="Isak A."/>
            <person name="van Brunt A."/>
            <person name="Nguyen C."/>
            <person name="Du F."/>
            <person name="Courtney L."/>
            <person name="Kalicki J."/>
            <person name="Ozersky P."/>
            <person name="Abbott S."/>
            <person name="Armstrong J."/>
            <person name="Belter E.A."/>
            <person name="Caruso L."/>
            <person name="Cedroni M."/>
            <person name="Cotton M."/>
            <person name="Davidson T."/>
            <person name="Desai A."/>
            <person name="Elliott G."/>
            <person name="Erb T."/>
            <person name="Fronick C."/>
            <person name="Gaige T."/>
            <person name="Haakenson W."/>
            <person name="Haglund K."/>
            <person name="Holmes A."/>
            <person name="Harkins R."/>
            <person name="Kim K."/>
            <person name="Kruchowski S.S."/>
            <person name="Strong C.M."/>
            <person name="Grewal N."/>
            <person name="Goyea E."/>
            <person name="Hou S."/>
            <person name="Levy A."/>
            <person name="Martinka S."/>
            <person name="Mead K."/>
            <person name="McLellan M.D."/>
            <person name="Meyer R."/>
            <person name="Randall-Maher J."/>
            <person name="Tomlinson C."/>
            <person name="Dauphin-Kohlberg S."/>
            <person name="Kozlowicz-Reilly A."/>
            <person name="Shah N."/>
            <person name="Swearengen-Shahid S."/>
            <person name="Snider J."/>
            <person name="Strong J.T."/>
            <person name="Thompson J."/>
            <person name="Yoakum M."/>
            <person name="Leonard S."/>
            <person name="Pearman C."/>
            <person name="Trani L."/>
            <person name="Radionenko M."/>
            <person name="Waligorski J.E."/>
            <person name="Wang C."/>
            <person name="Rock S.M."/>
            <person name="Tin-Wollam A.-M."/>
            <person name="Maupin R."/>
            <person name="Latreille P."/>
            <person name="Wendl M.C."/>
            <person name="Yang S.-P."/>
            <person name="Pohl C."/>
            <person name="Wallis J.W."/>
            <person name="Spieth J."/>
            <person name="Bieri T.A."/>
            <person name="Berkowicz N."/>
            <person name="Nelson J.O."/>
            <person name="Osborne J."/>
            <person name="Ding L."/>
            <person name="Meyer R."/>
            <person name="Sabo A."/>
            <person name="Shotland Y."/>
            <person name="Sinha P."/>
            <person name="Wohldmann P.E."/>
            <person name="Cook L.L."/>
            <person name="Hickenbotham M.T."/>
            <person name="Eldred J."/>
            <person name="Williams D."/>
            <person name="Jones T.A."/>
            <person name="She X."/>
            <person name="Ciccarelli F.D."/>
            <person name="Izaurralde E."/>
            <person name="Taylor J."/>
            <person name="Schmutz J."/>
            <person name="Myers R.M."/>
            <person name="Cox D.R."/>
            <person name="Huang X."/>
            <person name="McPherson J.D."/>
            <person name="Mardis E.R."/>
            <person name="Clifton S.W."/>
            <person name="Warren W.C."/>
            <person name="Chinwalla A.T."/>
            <person name="Eddy S.R."/>
            <person name="Marra M.A."/>
            <person name="Ovcharenko I."/>
            <person name="Furey T.S."/>
            <person name="Miller W."/>
            <person name="Eichler E.E."/>
            <person name="Bork P."/>
            <person name="Suyama M."/>
            <person name="Torrents D."/>
            <person name="Waterston R.H."/>
            <person name="Wilson R.K."/>
        </authorList>
    </citation>
    <scope>NUCLEOTIDE SEQUENCE [LARGE SCALE GENOMIC DNA]</scope>
</reference>
<reference key="3">
    <citation type="submission" date="2005-09" db="EMBL/GenBank/DDBJ databases">
        <authorList>
            <person name="Mural R.J."/>
            <person name="Istrail S."/>
            <person name="Sutton G.G."/>
            <person name="Florea L."/>
            <person name="Halpern A.L."/>
            <person name="Mobarry C.M."/>
            <person name="Lippert R."/>
            <person name="Walenz B."/>
            <person name="Shatkay H."/>
            <person name="Dew I."/>
            <person name="Miller J.R."/>
            <person name="Flanigan M.J."/>
            <person name="Edwards N.J."/>
            <person name="Bolanos R."/>
            <person name="Fasulo D."/>
            <person name="Halldorsson B.V."/>
            <person name="Hannenhalli S."/>
            <person name="Turner R."/>
            <person name="Yooseph S."/>
            <person name="Lu F."/>
            <person name="Nusskern D.R."/>
            <person name="Shue B.C."/>
            <person name="Zheng X.H."/>
            <person name="Zhong F."/>
            <person name="Delcher A.L."/>
            <person name="Huson D.H."/>
            <person name="Kravitz S.A."/>
            <person name="Mouchard L."/>
            <person name="Reinert K."/>
            <person name="Remington K.A."/>
            <person name="Clark A.G."/>
            <person name="Waterman M.S."/>
            <person name="Eichler E.E."/>
            <person name="Adams M.D."/>
            <person name="Hunkapiller M.W."/>
            <person name="Myers E.W."/>
            <person name="Venter J.C."/>
        </authorList>
    </citation>
    <scope>NUCLEOTIDE SEQUENCE [LARGE SCALE GENOMIC DNA]</scope>
</reference>
<reference key="4">
    <citation type="journal article" date="2004" name="Genome Res.">
        <title>The status, quality, and expansion of the NIH full-length cDNA project: the Mammalian Gene Collection (MGC).</title>
        <authorList>
            <consortium name="The MGC Project Team"/>
        </authorList>
    </citation>
    <scope>NUCLEOTIDE SEQUENCE [LARGE SCALE MRNA] (ISOFORM 2)</scope>
    <source>
        <tissue>Testis</tissue>
    </source>
</reference>
<reference key="5">
    <citation type="journal article" date="2009" name="Science">
        <title>Lysine acetylation targets protein complexes and co-regulates major cellular functions.</title>
        <authorList>
            <person name="Choudhary C."/>
            <person name="Kumar C."/>
            <person name="Gnad F."/>
            <person name="Nielsen M.L."/>
            <person name="Rehman M."/>
            <person name="Walther T.C."/>
            <person name="Olsen J.V."/>
            <person name="Mann M."/>
        </authorList>
    </citation>
    <scope>ACETYLATION [LARGE SCALE ANALYSIS] AT LYS-149</scope>
    <scope>IDENTIFICATION BY MASS SPECTROMETRY [LARGE SCALE ANALYSIS]</scope>
</reference>
<reference key="6">
    <citation type="journal article" date="2010" name="Cell">
        <title>The protein composition of mitotic chromosomes determined using multiclassifier combinatorial proteomics.</title>
        <authorList>
            <person name="Ohta S."/>
            <person name="Bukowski-Wills J.C."/>
            <person name="Sanchez-Pulido L."/>
            <person name="Alves Fde L."/>
            <person name="Wood L."/>
            <person name="Chen Z.A."/>
            <person name="Platani M."/>
            <person name="Fischer L."/>
            <person name="Hudson D.F."/>
            <person name="Ponting C.P."/>
            <person name="Fukagawa T."/>
            <person name="Earnshaw W.C."/>
            <person name="Rappsilber J."/>
        </authorList>
    </citation>
    <scope>SUBCELLULAR LOCATION</scope>
</reference>
<reference key="7">
    <citation type="journal article" date="2011" name="BMC Syst. Biol.">
        <title>Initial characterization of the human central proteome.</title>
        <authorList>
            <person name="Burkard T.R."/>
            <person name="Planyavsky M."/>
            <person name="Kaupe I."/>
            <person name="Breitwieser F.P."/>
            <person name="Buerckstuemmer T."/>
            <person name="Bennett K.L."/>
            <person name="Superti-Furga G."/>
            <person name="Colinge J."/>
        </authorList>
    </citation>
    <scope>IDENTIFICATION BY MASS SPECTROMETRY [LARGE SCALE ANALYSIS]</scope>
</reference>
<reference key="8">
    <citation type="journal article" date="2013" name="J. Proteome Res.">
        <title>Toward a comprehensive characterization of a human cancer cell phosphoproteome.</title>
        <authorList>
            <person name="Zhou H."/>
            <person name="Di Palma S."/>
            <person name="Preisinger C."/>
            <person name="Peng M."/>
            <person name="Polat A.N."/>
            <person name="Heck A.J."/>
            <person name="Mohammed S."/>
        </authorList>
    </citation>
    <scope>PHOSPHORYLATION [LARGE SCALE ANALYSIS] AT SER-141</scope>
    <scope>IDENTIFICATION BY MASS SPECTROMETRY [LARGE SCALE ANALYSIS]</scope>
    <source>
        <tissue>Erythroleukemia</tissue>
    </source>
</reference>
<comment type="interaction">
    <interactant intactId="EBI-2555378">
        <id>Q8N954</id>
    </interactant>
    <interactant intactId="EBI-2682765">
        <id>O60242</id>
        <label>ADGRB3</label>
    </interactant>
    <organismsDiffer>false</organismsDiffer>
    <experiments>3</experiments>
</comment>
<comment type="interaction">
    <interactant intactId="EBI-2555378">
        <id>Q8N954</id>
    </interactant>
    <interactant intactId="EBI-727004">
        <id>O00560</id>
        <label>SDCBP</label>
    </interactant>
    <organismsDiffer>false</organismsDiffer>
    <experiments>3</experiments>
</comment>
<comment type="interaction">
    <interactant intactId="EBI-12178961">
        <id>Q8N954-2</id>
    </interactant>
    <interactant intactId="EBI-301977">
        <id>P35659</id>
        <label>DEK</label>
    </interactant>
    <organismsDiffer>false</organismsDiffer>
    <experiments>3</experiments>
</comment>
<comment type="interaction">
    <interactant intactId="EBI-12178961">
        <id>Q8N954-2</id>
    </interactant>
    <interactant intactId="EBI-79165">
        <id>Q9NRD5</id>
        <label>PICK1</label>
    </interactant>
    <organismsDiffer>false</organismsDiffer>
    <experiments>3</experiments>
</comment>
<comment type="interaction">
    <interactant intactId="EBI-12178961">
        <id>Q8N954-2</id>
    </interactant>
    <interactant intactId="EBI-727004">
        <id>O00560</id>
        <label>SDCBP</label>
    </interactant>
    <organismsDiffer>false</organismsDiffer>
    <experiments>3</experiments>
</comment>
<comment type="interaction">
    <interactant intactId="EBI-12178961">
        <id>Q8N954-2</id>
    </interactant>
    <interactant intactId="EBI-17269964">
        <id>Q6S9Z5</id>
        <label>ZNF474</label>
    </interactant>
    <organismsDiffer>false</organismsDiffer>
    <experiments>3</experiments>
</comment>
<comment type="subcellular location">
    <subcellularLocation>
        <location evidence="4">Chromosome</location>
        <location evidence="4">Centromere</location>
        <location evidence="4">Kinetochore</location>
    </subcellularLocation>
</comment>
<comment type="alternative products">
    <event type="alternative splicing"/>
    <isoform>
        <id>Q8N954-1</id>
        <name>1</name>
        <sequence type="displayed"/>
    </isoform>
    <isoform>
        <id>Q8N954-2</id>
        <name>2</name>
        <sequence type="described" ref="VSP_023505 VSP_023506"/>
    </isoform>
</comment>
<comment type="similarity">
    <text evidence="8">Belongs to the GPATCH11 family.</text>
</comment>
<comment type="caution">
    <text evidence="8">It is uncertain whether Met-1 or Met-27 is the initiator.</text>
</comment>
<comment type="sequence caution" evidence="8">
    <conflict type="erroneous initiation">
        <sequence resource="EMBL-CDS" id="BAH11850"/>
    </conflict>
    <text>Truncated N-terminus.</text>
</comment>